<sequence>MTESREPHVAGSAAPRPEPANGLASGQPSSRARYSRVLLKLGGEMFGGGQVGLDPDVVAQVARQIAEVVRGGVQVAVVIGGGNFFRGAQLQQRGMERTRSDYMGMLGTVMNSLALQDFLEKEGIVTRVQTAITMGQVAEPYLPLRAVRHLEKGRVVIFGAGMGLPYFSTDTTAAQRALEIGAEVVLMAKAVDGVFSADPRQYPEAELITAISHREVIDRGLRVADATAFSLCMDNGMPILVFNLLTNGNIARAVAGEKIGTLVTT</sequence>
<proteinExistence type="inferred from homology"/>
<keyword id="KW-0067">ATP-binding</keyword>
<keyword id="KW-0963">Cytoplasm</keyword>
<keyword id="KW-0418">Kinase</keyword>
<keyword id="KW-0547">Nucleotide-binding</keyword>
<keyword id="KW-0665">Pyrimidine biosynthesis</keyword>
<keyword id="KW-0808">Transferase</keyword>
<dbReference type="EC" id="2.7.4.22" evidence="1"/>
<dbReference type="EMBL" id="CP000479">
    <property type="protein sequence ID" value="ABK64473.1"/>
    <property type="status" value="ALT_INIT"/>
    <property type="molecule type" value="Genomic_DNA"/>
</dbReference>
<dbReference type="RefSeq" id="WP_003875105.1">
    <property type="nucleotide sequence ID" value="NC_008595.1"/>
</dbReference>
<dbReference type="SMR" id="A0QJ19"/>
<dbReference type="GeneID" id="75271126"/>
<dbReference type="KEGG" id="mav:MAV_3733"/>
<dbReference type="HOGENOM" id="CLU_033861_0_0_11"/>
<dbReference type="UniPathway" id="UPA00159">
    <property type="reaction ID" value="UER00275"/>
</dbReference>
<dbReference type="Proteomes" id="UP000001574">
    <property type="component" value="Chromosome"/>
</dbReference>
<dbReference type="GO" id="GO:0005737">
    <property type="term" value="C:cytoplasm"/>
    <property type="evidence" value="ECO:0007669"/>
    <property type="project" value="UniProtKB-SubCell"/>
</dbReference>
<dbReference type="GO" id="GO:0005524">
    <property type="term" value="F:ATP binding"/>
    <property type="evidence" value="ECO:0007669"/>
    <property type="project" value="UniProtKB-KW"/>
</dbReference>
<dbReference type="GO" id="GO:0033862">
    <property type="term" value="F:UMP kinase activity"/>
    <property type="evidence" value="ECO:0007669"/>
    <property type="project" value="UniProtKB-EC"/>
</dbReference>
<dbReference type="GO" id="GO:0044210">
    <property type="term" value="P:'de novo' CTP biosynthetic process"/>
    <property type="evidence" value="ECO:0007669"/>
    <property type="project" value="UniProtKB-UniRule"/>
</dbReference>
<dbReference type="GO" id="GO:0006225">
    <property type="term" value="P:UDP biosynthetic process"/>
    <property type="evidence" value="ECO:0007669"/>
    <property type="project" value="TreeGrafter"/>
</dbReference>
<dbReference type="CDD" id="cd04254">
    <property type="entry name" value="AAK_UMPK-PyrH-Ec"/>
    <property type="match status" value="1"/>
</dbReference>
<dbReference type="FunFam" id="3.40.1160.10:FF:000001">
    <property type="entry name" value="Uridylate kinase"/>
    <property type="match status" value="1"/>
</dbReference>
<dbReference type="Gene3D" id="3.40.1160.10">
    <property type="entry name" value="Acetylglutamate kinase-like"/>
    <property type="match status" value="1"/>
</dbReference>
<dbReference type="HAMAP" id="MF_01220_B">
    <property type="entry name" value="PyrH_B"/>
    <property type="match status" value="1"/>
</dbReference>
<dbReference type="InterPro" id="IPR036393">
    <property type="entry name" value="AceGlu_kinase-like_sf"/>
</dbReference>
<dbReference type="InterPro" id="IPR001048">
    <property type="entry name" value="Asp/Glu/Uridylate_kinase"/>
</dbReference>
<dbReference type="InterPro" id="IPR011817">
    <property type="entry name" value="Uridylate_kinase"/>
</dbReference>
<dbReference type="InterPro" id="IPR015963">
    <property type="entry name" value="Uridylate_kinase_bac"/>
</dbReference>
<dbReference type="NCBIfam" id="TIGR02075">
    <property type="entry name" value="pyrH_bact"/>
    <property type="match status" value="1"/>
</dbReference>
<dbReference type="PANTHER" id="PTHR42833">
    <property type="entry name" value="URIDYLATE KINASE"/>
    <property type="match status" value="1"/>
</dbReference>
<dbReference type="PANTHER" id="PTHR42833:SF4">
    <property type="entry name" value="URIDYLATE KINASE PUMPKIN, CHLOROPLASTIC"/>
    <property type="match status" value="1"/>
</dbReference>
<dbReference type="Pfam" id="PF00696">
    <property type="entry name" value="AA_kinase"/>
    <property type="match status" value="1"/>
</dbReference>
<dbReference type="PIRSF" id="PIRSF005650">
    <property type="entry name" value="Uridylate_kin"/>
    <property type="match status" value="1"/>
</dbReference>
<dbReference type="SUPFAM" id="SSF53633">
    <property type="entry name" value="Carbamate kinase-like"/>
    <property type="match status" value="1"/>
</dbReference>
<reference key="1">
    <citation type="submission" date="2006-10" db="EMBL/GenBank/DDBJ databases">
        <authorList>
            <person name="Fleischmann R.D."/>
            <person name="Dodson R.J."/>
            <person name="Haft D.H."/>
            <person name="Merkel J.S."/>
            <person name="Nelson W.C."/>
            <person name="Fraser C.M."/>
        </authorList>
    </citation>
    <scope>NUCLEOTIDE SEQUENCE [LARGE SCALE GENOMIC DNA]</scope>
    <source>
        <strain>104</strain>
    </source>
</reference>
<evidence type="ECO:0000255" key="1">
    <source>
        <dbReference type="HAMAP-Rule" id="MF_01220"/>
    </source>
</evidence>
<evidence type="ECO:0000256" key="2">
    <source>
        <dbReference type="SAM" id="MobiDB-lite"/>
    </source>
</evidence>
<evidence type="ECO:0000305" key="3"/>
<accession>A0QJ19</accession>
<name>PYRH_MYCA1</name>
<comment type="function">
    <text evidence="1">Catalyzes the reversible phosphorylation of UMP to UDP.</text>
</comment>
<comment type="catalytic activity">
    <reaction evidence="1">
        <text>UMP + ATP = UDP + ADP</text>
        <dbReference type="Rhea" id="RHEA:24400"/>
        <dbReference type="ChEBI" id="CHEBI:30616"/>
        <dbReference type="ChEBI" id="CHEBI:57865"/>
        <dbReference type="ChEBI" id="CHEBI:58223"/>
        <dbReference type="ChEBI" id="CHEBI:456216"/>
        <dbReference type="EC" id="2.7.4.22"/>
    </reaction>
</comment>
<comment type="activity regulation">
    <text evidence="1">Inhibited by UTP.</text>
</comment>
<comment type="pathway">
    <text evidence="1">Pyrimidine metabolism; CTP biosynthesis via de novo pathway; UDP from UMP (UMPK route): step 1/1.</text>
</comment>
<comment type="subunit">
    <text evidence="1">Homohexamer.</text>
</comment>
<comment type="subcellular location">
    <subcellularLocation>
        <location evidence="1">Cytoplasm</location>
    </subcellularLocation>
</comment>
<comment type="similarity">
    <text evidence="1">Belongs to the UMP kinase family.</text>
</comment>
<comment type="sequence caution" evidence="3">
    <conflict type="erroneous initiation">
        <sequence resource="EMBL-CDS" id="ABK64473"/>
    </conflict>
</comment>
<gene>
    <name evidence="1" type="primary">pyrH</name>
    <name type="ordered locus">MAV_3733</name>
</gene>
<protein>
    <recommendedName>
        <fullName evidence="1">Uridylate kinase</fullName>
        <shortName evidence="1">UK</shortName>
        <ecNumber evidence="1">2.7.4.22</ecNumber>
    </recommendedName>
    <alternativeName>
        <fullName evidence="1">Uridine monophosphate kinase</fullName>
        <shortName evidence="1">UMP kinase</shortName>
        <shortName evidence="1">UMPK</shortName>
    </alternativeName>
</protein>
<organism>
    <name type="scientific">Mycobacterium avium (strain 104)</name>
    <dbReference type="NCBI Taxonomy" id="243243"/>
    <lineage>
        <taxon>Bacteria</taxon>
        <taxon>Bacillati</taxon>
        <taxon>Actinomycetota</taxon>
        <taxon>Actinomycetes</taxon>
        <taxon>Mycobacteriales</taxon>
        <taxon>Mycobacteriaceae</taxon>
        <taxon>Mycobacterium</taxon>
        <taxon>Mycobacterium avium complex (MAC)</taxon>
    </lineage>
</organism>
<feature type="chain" id="PRO_0000323885" description="Uridylate kinase">
    <location>
        <begin position="1"/>
        <end position="265"/>
    </location>
</feature>
<feature type="region of interest" description="Disordered" evidence="2">
    <location>
        <begin position="1"/>
        <end position="29"/>
    </location>
</feature>
<feature type="binding site" evidence="1">
    <location>
        <begin position="40"/>
        <end position="43"/>
    </location>
    <ligand>
        <name>ATP</name>
        <dbReference type="ChEBI" id="CHEBI:30616"/>
    </ligand>
</feature>
<feature type="binding site" evidence="1">
    <location>
        <position position="81"/>
    </location>
    <ligand>
        <name>UMP</name>
        <dbReference type="ChEBI" id="CHEBI:57865"/>
    </ligand>
</feature>
<feature type="binding site" evidence="1">
    <location>
        <position position="82"/>
    </location>
    <ligand>
        <name>ATP</name>
        <dbReference type="ChEBI" id="CHEBI:30616"/>
    </ligand>
</feature>
<feature type="binding site" evidence="1">
    <location>
        <position position="86"/>
    </location>
    <ligand>
        <name>ATP</name>
        <dbReference type="ChEBI" id="CHEBI:30616"/>
    </ligand>
</feature>
<feature type="binding site" evidence="1">
    <location>
        <position position="101"/>
    </location>
    <ligand>
        <name>UMP</name>
        <dbReference type="ChEBI" id="CHEBI:57865"/>
    </ligand>
</feature>
<feature type="binding site" evidence="1">
    <location>
        <begin position="162"/>
        <end position="169"/>
    </location>
    <ligand>
        <name>UMP</name>
        <dbReference type="ChEBI" id="CHEBI:57865"/>
    </ligand>
</feature>
<feature type="binding site" evidence="1">
    <location>
        <position position="195"/>
    </location>
    <ligand>
        <name>ATP</name>
        <dbReference type="ChEBI" id="CHEBI:30616"/>
    </ligand>
</feature>
<feature type="binding site" evidence="1">
    <location>
        <position position="198"/>
    </location>
    <ligand>
        <name>ATP</name>
        <dbReference type="ChEBI" id="CHEBI:30616"/>
    </ligand>
</feature>